<reference key="1">
    <citation type="journal article" date="2004" name="Genome Res.">
        <title>The complete genome and proteome of Mycoplasma mobile.</title>
        <authorList>
            <person name="Jaffe J.D."/>
            <person name="Stange-Thomann N."/>
            <person name="Smith C."/>
            <person name="DeCaprio D."/>
            <person name="Fisher S."/>
            <person name="Butler J."/>
            <person name="Calvo S."/>
            <person name="Elkins T."/>
            <person name="FitzGerald M.G."/>
            <person name="Hafez N."/>
            <person name="Kodira C.D."/>
            <person name="Major J."/>
            <person name="Wang S."/>
            <person name="Wilkinson J."/>
            <person name="Nicol R."/>
            <person name="Nusbaum C."/>
            <person name="Birren B."/>
            <person name="Berg H.C."/>
            <person name="Church G.M."/>
        </authorList>
    </citation>
    <scope>NUCLEOTIDE SEQUENCE [LARGE SCALE GENOMIC DNA]</scope>
    <source>
        <strain>ATCC 43663 / NCTC 11711 / 163 K</strain>
    </source>
</reference>
<organism>
    <name type="scientific">Mycoplasma mobile (strain ATCC 43663 / 163K / NCTC 11711)</name>
    <name type="common">Mesomycoplasma mobile</name>
    <dbReference type="NCBI Taxonomy" id="267748"/>
    <lineage>
        <taxon>Bacteria</taxon>
        <taxon>Bacillati</taxon>
        <taxon>Mycoplasmatota</taxon>
        <taxon>Mycoplasmoidales</taxon>
        <taxon>Metamycoplasmataceae</taxon>
        <taxon>Mesomycoplasma</taxon>
    </lineage>
</organism>
<name>RL2_MYCM1</name>
<comment type="function">
    <text evidence="1">One of the primary rRNA binding proteins. Required for association of the 30S and 50S subunits to form the 70S ribosome, for tRNA binding and peptide bond formation. It has been suggested to have peptidyltransferase activity; this is somewhat controversial. Makes several contacts with the 16S rRNA in the 70S ribosome.</text>
</comment>
<comment type="subunit">
    <text evidence="1">Part of the 50S ribosomal subunit. Forms a bridge to the 30S subunit in the 70S ribosome.</text>
</comment>
<comment type="similarity">
    <text evidence="1">Belongs to the universal ribosomal protein uL2 family.</text>
</comment>
<sequence>MAIKYFKPTTNGRRNMSSLDYSKNLTGHEPTKSLMTILKKKAGRNNSGQITTRHKGSGEKRKYRLVDFKRQKDNIEAIVKTIEYDPNRSANISLIVYKDGFKSYILYPKGLKVNDVIVSGEDVDIKIGNTLPLKNIPEGTFIHNIEMQPKGGAIIARSAGSSAQILGKDDNGKYVVLRLKSGETRRILAECRATIGVVGNEEHSLVNVGKAGRNRHKGIRPTVRGSAMNPNDHPHGGGEGKQPIGRKSPMTPWGRKALGPKTRKTNKSSTKLIIRGRKKRINN</sequence>
<proteinExistence type="inferred from homology"/>
<protein>
    <recommendedName>
        <fullName evidence="1">Large ribosomal subunit protein uL2</fullName>
    </recommendedName>
    <alternativeName>
        <fullName evidence="3">50S ribosomal protein L2</fullName>
    </alternativeName>
</protein>
<gene>
    <name evidence="1" type="primary">rplB</name>
    <name type="ordered locus">MMOB2380</name>
</gene>
<accession>Q6KI52</accession>
<feature type="chain" id="PRO_0000237211" description="Large ribosomal subunit protein uL2">
    <location>
        <begin position="1"/>
        <end position="283"/>
    </location>
</feature>
<feature type="region of interest" description="Disordered" evidence="2">
    <location>
        <begin position="215"/>
        <end position="283"/>
    </location>
</feature>
<feature type="compositionally biased region" description="Basic residues" evidence="2">
    <location>
        <begin position="274"/>
        <end position="283"/>
    </location>
</feature>
<dbReference type="EMBL" id="AE017308">
    <property type="protein sequence ID" value="AAT27724.1"/>
    <property type="molecule type" value="Genomic_DNA"/>
</dbReference>
<dbReference type="RefSeq" id="WP_011264758.1">
    <property type="nucleotide sequence ID" value="NC_006908.1"/>
</dbReference>
<dbReference type="SMR" id="Q6KI52"/>
<dbReference type="STRING" id="267748.MMOB2380"/>
<dbReference type="KEGG" id="mmo:MMOB2380"/>
<dbReference type="eggNOG" id="COG0090">
    <property type="taxonomic scope" value="Bacteria"/>
</dbReference>
<dbReference type="HOGENOM" id="CLU_036235_2_1_14"/>
<dbReference type="OrthoDB" id="9778722at2"/>
<dbReference type="Proteomes" id="UP000009072">
    <property type="component" value="Chromosome"/>
</dbReference>
<dbReference type="GO" id="GO:0015934">
    <property type="term" value="C:large ribosomal subunit"/>
    <property type="evidence" value="ECO:0007669"/>
    <property type="project" value="InterPro"/>
</dbReference>
<dbReference type="GO" id="GO:0019843">
    <property type="term" value="F:rRNA binding"/>
    <property type="evidence" value="ECO:0007669"/>
    <property type="project" value="UniProtKB-UniRule"/>
</dbReference>
<dbReference type="GO" id="GO:0003735">
    <property type="term" value="F:structural constituent of ribosome"/>
    <property type="evidence" value="ECO:0007669"/>
    <property type="project" value="InterPro"/>
</dbReference>
<dbReference type="GO" id="GO:0016740">
    <property type="term" value="F:transferase activity"/>
    <property type="evidence" value="ECO:0007669"/>
    <property type="project" value="InterPro"/>
</dbReference>
<dbReference type="GO" id="GO:0002181">
    <property type="term" value="P:cytoplasmic translation"/>
    <property type="evidence" value="ECO:0007669"/>
    <property type="project" value="TreeGrafter"/>
</dbReference>
<dbReference type="FunFam" id="2.30.30.30:FF:000001">
    <property type="entry name" value="50S ribosomal protein L2"/>
    <property type="match status" value="1"/>
</dbReference>
<dbReference type="FunFam" id="2.40.50.140:FF:000003">
    <property type="entry name" value="50S ribosomal protein L2"/>
    <property type="match status" value="1"/>
</dbReference>
<dbReference type="FunFam" id="4.10.950.10:FF:000001">
    <property type="entry name" value="50S ribosomal protein L2"/>
    <property type="match status" value="1"/>
</dbReference>
<dbReference type="Gene3D" id="2.30.30.30">
    <property type="match status" value="1"/>
</dbReference>
<dbReference type="Gene3D" id="2.40.50.140">
    <property type="entry name" value="Nucleic acid-binding proteins"/>
    <property type="match status" value="1"/>
</dbReference>
<dbReference type="Gene3D" id="4.10.950.10">
    <property type="entry name" value="Ribosomal protein L2, domain 3"/>
    <property type="match status" value="1"/>
</dbReference>
<dbReference type="HAMAP" id="MF_01320_B">
    <property type="entry name" value="Ribosomal_uL2_B"/>
    <property type="match status" value="1"/>
</dbReference>
<dbReference type="InterPro" id="IPR012340">
    <property type="entry name" value="NA-bd_OB-fold"/>
</dbReference>
<dbReference type="InterPro" id="IPR014722">
    <property type="entry name" value="Rib_uL2_dom2"/>
</dbReference>
<dbReference type="InterPro" id="IPR002171">
    <property type="entry name" value="Ribosomal_uL2"/>
</dbReference>
<dbReference type="InterPro" id="IPR005880">
    <property type="entry name" value="Ribosomal_uL2_bac/org-type"/>
</dbReference>
<dbReference type="InterPro" id="IPR022669">
    <property type="entry name" value="Ribosomal_uL2_C"/>
</dbReference>
<dbReference type="InterPro" id="IPR022671">
    <property type="entry name" value="Ribosomal_uL2_CS"/>
</dbReference>
<dbReference type="InterPro" id="IPR014726">
    <property type="entry name" value="Ribosomal_uL2_dom3"/>
</dbReference>
<dbReference type="InterPro" id="IPR022666">
    <property type="entry name" value="Ribosomal_uL2_RNA-bd_dom"/>
</dbReference>
<dbReference type="InterPro" id="IPR008991">
    <property type="entry name" value="Translation_prot_SH3-like_sf"/>
</dbReference>
<dbReference type="NCBIfam" id="TIGR01171">
    <property type="entry name" value="rplB_bact"/>
    <property type="match status" value="1"/>
</dbReference>
<dbReference type="PANTHER" id="PTHR13691:SF5">
    <property type="entry name" value="LARGE RIBOSOMAL SUBUNIT PROTEIN UL2M"/>
    <property type="match status" value="1"/>
</dbReference>
<dbReference type="PANTHER" id="PTHR13691">
    <property type="entry name" value="RIBOSOMAL PROTEIN L2"/>
    <property type="match status" value="1"/>
</dbReference>
<dbReference type="Pfam" id="PF00181">
    <property type="entry name" value="Ribosomal_L2"/>
    <property type="match status" value="1"/>
</dbReference>
<dbReference type="Pfam" id="PF03947">
    <property type="entry name" value="Ribosomal_L2_C"/>
    <property type="match status" value="1"/>
</dbReference>
<dbReference type="PIRSF" id="PIRSF002158">
    <property type="entry name" value="Ribosomal_L2"/>
    <property type="match status" value="1"/>
</dbReference>
<dbReference type="SMART" id="SM01383">
    <property type="entry name" value="Ribosomal_L2"/>
    <property type="match status" value="1"/>
</dbReference>
<dbReference type="SMART" id="SM01382">
    <property type="entry name" value="Ribosomal_L2_C"/>
    <property type="match status" value="1"/>
</dbReference>
<dbReference type="SUPFAM" id="SSF50249">
    <property type="entry name" value="Nucleic acid-binding proteins"/>
    <property type="match status" value="1"/>
</dbReference>
<dbReference type="SUPFAM" id="SSF50104">
    <property type="entry name" value="Translation proteins SH3-like domain"/>
    <property type="match status" value="1"/>
</dbReference>
<dbReference type="PROSITE" id="PS00467">
    <property type="entry name" value="RIBOSOMAL_L2"/>
    <property type="match status" value="1"/>
</dbReference>
<evidence type="ECO:0000255" key="1">
    <source>
        <dbReference type="HAMAP-Rule" id="MF_01320"/>
    </source>
</evidence>
<evidence type="ECO:0000256" key="2">
    <source>
        <dbReference type="SAM" id="MobiDB-lite"/>
    </source>
</evidence>
<evidence type="ECO:0000305" key="3"/>
<keyword id="KW-1185">Reference proteome</keyword>
<keyword id="KW-0687">Ribonucleoprotein</keyword>
<keyword id="KW-0689">Ribosomal protein</keyword>
<keyword id="KW-0694">RNA-binding</keyword>
<keyword id="KW-0699">rRNA-binding</keyword>